<gene>
    <name type="primary">CAPN3</name>
    <name type="synonym">NCL1</name>
</gene>
<feature type="chain" id="PRO_0000207705" description="Calpain-3">
    <location>
        <begin position="1"/>
        <end position="822"/>
    </location>
</feature>
<feature type="domain" description="Calpain catalytic" evidence="2">
    <location>
        <begin position="74"/>
        <end position="418"/>
    </location>
</feature>
<feature type="domain" description="EF-hand 1" evidence="3">
    <location>
        <begin position="650"/>
        <end position="684"/>
    </location>
</feature>
<feature type="domain" description="EF-hand 2" evidence="3">
    <location>
        <begin position="693"/>
        <end position="726"/>
    </location>
</feature>
<feature type="domain" description="EF-hand 3" evidence="3">
    <location>
        <begin position="723"/>
        <end position="758"/>
    </location>
</feature>
<feature type="domain" description="EF-hand 4" evidence="3">
    <location>
        <begin position="788"/>
        <end position="822"/>
    </location>
</feature>
<feature type="region of interest" description="Disordered" evidence="4">
    <location>
        <begin position="1"/>
        <end position="36"/>
    </location>
</feature>
<feature type="region of interest" description="Domain III">
    <location>
        <begin position="419"/>
        <end position="587"/>
    </location>
</feature>
<feature type="region of interest" description="Linker">
    <location>
        <begin position="588"/>
        <end position="650"/>
    </location>
</feature>
<feature type="region of interest" description="Disordered" evidence="4">
    <location>
        <begin position="604"/>
        <end position="652"/>
    </location>
</feature>
<feature type="region of interest" description="Domain IV">
    <location>
        <begin position="651"/>
        <end position="822"/>
    </location>
</feature>
<feature type="compositionally biased region" description="Basic and acidic residues" evidence="4">
    <location>
        <begin position="623"/>
        <end position="635"/>
    </location>
</feature>
<feature type="active site" evidence="2">
    <location>
        <position position="129"/>
    </location>
</feature>
<feature type="active site" evidence="2">
    <location>
        <position position="335"/>
    </location>
</feature>
<feature type="active site" evidence="2">
    <location>
        <position position="359"/>
    </location>
</feature>
<feature type="binding site" evidence="1">
    <location>
        <position position="663"/>
    </location>
    <ligand>
        <name>Ca(2+)</name>
        <dbReference type="ChEBI" id="CHEBI:29108"/>
        <label>1</label>
    </ligand>
</feature>
<feature type="binding site" evidence="1">
    <location>
        <position position="666"/>
    </location>
    <ligand>
        <name>Ca(2+)</name>
        <dbReference type="ChEBI" id="CHEBI:29108"/>
        <label>1</label>
    </ligand>
</feature>
<feature type="binding site" evidence="1">
    <location>
        <position position="668"/>
    </location>
    <ligand>
        <name>Ca(2+)</name>
        <dbReference type="ChEBI" id="CHEBI:29108"/>
        <label>1</label>
    </ligand>
</feature>
<feature type="binding site" evidence="1">
    <location>
        <position position="673"/>
    </location>
    <ligand>
        <name>Ca(2+)</name>
        <dbReference type="ChEBI" id="CHEBI:29108"/>
        <label>1</label>
    </ligand>
</feature>
<feature type="binding site" evidence="3">
    <location>
        <position position="706"/>
    </location>
    <ligand>
        <name>Ca(2+)</name>
        <dbReference type="ChEBI" id="CHEBI:29108"/>
        <label>2</label>
    </ligand>
</feature>
<feature type="binding site" evidence="3">
    <location>
        <position position="708"/>
    </location>
    <ligand>
        <name>Ca(2+)</name>
        <dbReference type="ChEBI" id="CHEBI:29108"/>
        <label>2</label>
    </ligand>
</feature>
<feature type="binding site" evidence="3">
    <location>
        <position position="710"/>
    </location>
    <ligand>
        <name>Ca(2+)</name>
        <dbReference type="ChEBI" id="CHEBI:29108"/>
        <label>2</label>
    </ligand>
</feature>
<feature type="binding site" evidence="3">
    <location>
        <position position="712"/>
    </location>
    <ligand>
        <name>Ca(2+)</name>
        <dbReference type="ChEBI" id="CHEBI:29108"/>
        <label>2</label>
    </ligand>
</feature>
<feature type="binding site" evidence="3">
    <location>
        <position position="717"/>
    </location>
    <ligand>
        <name>Ca(2+)</name>
        <dbReference type="ChEBI" id="CHEBI:29108"/>
        <label>2</label>
    </ligand>
</feature>
<feature type="binding site" evidence="3">
    <location>
        <position position="736"/>
    </location>
    <ligand>
        <name>Ca(2+)</name>
        <dbReference type="ChEBI" id="CHEBI:29108"/>
        <label>3</label>
    </ligand>
</feature>
<feature type="binding site" evidence="3">
    <location>
        <position position="738"/>
    </location>
    <ligand>
        <name>Ca(2+)</name>
        <dbReference type="ChEBI" id="CHEBI:29108"/>
        <label>3</label>
    </ligand>
</feature>
<feature type="binding site" evidence="3">
    <location>
        <position position="740"/>
    </location>
    <ligand>
        <name>Ca(2+)</name>
        <dbReference type="ChEBI" id="CHEBI:29108"/>
        <label>3</label>
    </ligand>
</feature>
<feature type="binding site" evidence="3">
    <location>
        <position position="742"/>
    </location>
    <ligand>
        <name>Ca(2+)</name>
        <dbReference type="ChEBI" id="CHEBI:29108"/>
        <label>3</label>
    </ligand>
</feature>
<feature type="binding site" evidence="3">
    <location>
        <position position="747"/>
    </location>
    <ligand>
        <name>Ca(2+)</name>
        <dbReference type="ChEBI" id="CHEBI:29108"/>
        <label>3</label>
    </ligand>
</feature>
<feature type="binding site" evidence="1">
    <location>
        <position position="801"/>
    </location>
    <ligand>
        <name>Ca(2+)</name>
        <dbReference type="ChEBI" id="CHEBI:29108"/>
        <label>4</label>
    </ligand>
</feature>
<feature type="binding site" evidence="1">
    <location>
        <position position="803"/>
    </location>
    <ligand>
        <name>Ca(2+)</name>
        <dbReference type="ChEBI" id="CHEBI:29108"/>
        <label>4</label>
    </ligand>
</feature>
<feature type="binding site" evidence="1">
    <location>
        <position position="805"/>
    </location>
    <ligand>
        <name>Ca(2+)</name>
        <dbReference type="ChEBI" id="CHEBI:29108"/>
        <label>4</label>
    </ligand>
</feature>
<feature type="binding site" evidence="1">
    <location>
        <position position="807"/>
    </location>
    <ligand>
        <name>Ca(2+)</name>
        <dbReference type="ChEBI" id="CHEBI:29108"/>
        <label>4</label>
    </ligand>
</feature>
<feature type="sequence conflict" description="In Ref. 2; AAC24459." evidence="5" ref="2">
    <original>K</original>
    <variation>N</variation>
    <location>
        <position position="282"/>
    </location>
</feature>
<feature type="sequence conflict" description="In Ref. 2; AAC24459." evidence="5" ref="2">
    <original>GC</original>
    <variation>V</variation>
    <location>
        <begin position="308"/>
        <end position="309"/>
    </location>
</feature>
<evidence type="ECO:0000250" key="1">
    <source>
        <dbReference type="UniProtKB" id="P20807"/>
    </source>
</evidence>
<evidence type="ECO:0000255" key="2">
    <source>
        <dbReference type="PROSITE-ProRule" id="PRU00239"/>
    </source>
</evidence>
<evidence type="ECO:0000255" key="3">
    <source>
        <dbReference type="PROSITE-ProRule" id="PRU00448"/>
    </source>
</evidence>
<evidence type="ECO:0000256" key="4">
    <source>
        <dbReference type="SAM" id="MobiDB-lite"/>
    </source>
</evidence>
<evidence type="ECO:0000305" key="5"/>
<comment type="function">
    <text evidence="1">Calcium-regulated non-lysosomal thiol-protease. Proteolytically cleaves CTBP1. Mediates, with UTP25, the proteasome-independent degradation of p53/TP53.</text>
</comment>
<comment type="catalytic activity">
    <reaction>
        <text>Broad endopeptidase activity.</text>
        <dbReference type="EC" id="3.4.22.54"/>
    </reaction>
</comment>
<comment type="activity regulation">
    <text>Activated by micromolar concentrations of calcium and inhibited by calpastatin.</text>
</comment>
<comment type="subunit">
    <text evidence="1">Homodimer; via EF-hand domain 4. Interacts with TTN/titin. Interacts with CMYA5; this interaction, which results in CMYA5 proteolysis, may protect CAPN3 from autolysis. Interacts with SIMC1. Interacts with UTP25; the interaction is required for CAPN3 translocation to the nucleolus.</text>
</comment>
<comment type="subcellular location">
    <subcellularLocation>
        <location evidence="1">Cytoplasm</location>
    </subcellularLocation>
    <subcellularLocation>
        <location evidence="1">Nucleus</location>
        <location evidence="1">Nucleolus</location>
    </subcellularLocation>
</comment>
<comment type="tissue specificity">
    <text>Skeletal muscle.</text>
</comment>
<comment type="similarity">
    <text evidence="5">Belongs to the peptidase C2 family.</text>
</comment>
<name>CAN3_BOVIN</name>
<proteinExistence type="evidence at transcript level"/>
<protein>
    <recommendedName>
        <fullName>Calpain-3</fullName>
        <ecNumber>3.4.22.54</ecNumber>
    </recommendedName>
    <alternativeName>
        <fullName>Calcium-activated neutral proteinase 3</fullName>
        <shortName>CANP 3</shortName>
    </alternativeName>
    <alternativeName>
        <fullName>Calpain L3</fullName>
    </alternativeName>
    <alternativeName>
        <fullName>Calpain p94</fullName>
    </alternativeName>
    <alternativeName>
        <fullName>Muscle-specific calcium-activated neutral protease 3</fullName>
    </alternativeName>
    <alternativeName>
        <fullName>New calpain 1</fullName>
        <shortName>nCL-1</shortName>
    </alternativeName>
</protein>
<keyword id="KW-0106">Calcium</keyword>
<keyword id="KW-0963">Cytoplasm</keyword>
<keyword id="KW-0378">Hydrolase</keyword>
<keyword id="KW-0479">Metal-binding</keyword>
<keyword id="KW-0539">Nucleus</keyword>
<keyword id="KW-0645">Protease</keyword>
<keyword id="KW-1185">Reference proteome</keyword>
<keyword id="KW-0677">Repeat</keyword>
<keyword id="KW-0788">Thiol protease</keyword>
<organism>
    <name type="scientific">Bos taurus</name>
    <name type="common">Bovine</name>
    <dbReference type="NCBI Taxonomy" id="9913"/>
    <lineage>
        <taxon>Eukaryota</taxon>
        <taxon>Metazoa</taxon>
        <taxon>Chordata</taxon>
        <taxon>Craniata</taxon>
        <taxon>Vertebrata</taxon>
        <taxon>Euteleostomi</taxon>
        <taxon>Mammalia</taxon>
        <taxon>Eutheria</taxon>
        <taxon>Laurasiatheria</taxon>
        <taxon>Artiodactyla</taxon>
        <taxon>Ruminantia</taxon>
        <taxon>Pecora</taxon>
        <taxon>Bovidae</taxon>
        <taxon>Bovinae</taxon>
        <taxon>Bos</taxon>
    </lineage>
</organism>
<dbReference type="EC" id="3.4.22.54"/>
<dbReference type="EMBL" id="AF087569">
    <property type="protein sequence ID" value="AAF23261.1"/>
    <property type="molecule type" value="mRNA"/>
</dbReference>
<dbReference type="EMBL" id="U07858">
    <property type="protein sequence ID" value="AAC24459.1"/>
    <property type="molecule type" value="mRNA"/>
</dbReference>
<dbReference type="EMBL" id="AF115744">
    <property type="protein sequence ID" value="AAD05333.1"/>
    <property type="molecule type" value="mRNA"/>
</dbReference>
<dbReference type="RefSeq" id="NP_776685.1">
    <property type="nucleotide sequence ID" value="NM_174260.2"/>
</dbReference>
<dbReference type="SMR" id="P51186"/>
<dbReference type="FunCoup" id="P51186">
    <property type="interactions" value="50"/>
</dbReference>
<dbReference type="STRING" id="9913.ENSBTAP00000067036"/>
<dbReference type="MEROPS" id="C02.004"/>
<dbReference type="PaxDb" id="9913-ENSBTAP00000011677"/>
<dbReference type="GeneID" id="281663"/>
<dbReference type="KEGG" id="bta:281663"/>
<dbReference type="CTD" id="825"/>
<dbReference type="eggNOG" id="KOG0045">
    <property type="taxonomic scope" value="Eukaryota"/>
</dbReference>
<dbReference type="InParanoid" id="P51186"/>
<dbReference type="OrthoDB" id="424753at2759"/>
<dbReference type="BRENDA" id="3.4.22.54">
    <property type="organism ID" value="908"/>
</dbReference>
<dbReference type="Proteomes" id="UP000009136">
    <property type="component" value="Unplaced"/>
</dbReference>
<dbReference type="GO" id="GO:0005737">
    <property type="term" value="C:cytoplasm"/>
    <property type="evidence" value="ECO:0000250"/>
    <property type="project" value="UniProtKB"/>
</dbReference>
<dbReference type="GO" id="GO:0005829">
    <property type="term" value="C:cytosol"/>
    <property type="evidence" value="ECO:0000250"/>
    <property type="project" value="UniProtKB"/>
</dbReference>
<dbReference type="GO" id="GO:0030016">
    <property type="term" value="C:myofibril"/>
    <property type="evidence" value="ECO:0000250"/>
    <property type="project" value="UniProtKB"/>
</dbReference>
<dbReference type="GO" id="GO:0005730">
    <property type="term" value="C:nucleolus"/>
    <property type="evidence" value="ECO:0000250"/>
    <property type="project" value="UniProtKB"/>
</dbReference>
<dbReference type="GO" id="GO:0005634">
    <property type="term" value="C:nucleus"/>
    <property type="evidence" value="ECO:0000250"/>
    <property type="project" value="UniProtKB"/>
</dbReference>
<dbReference type="GO" id="GO:0005886">
    <property type="term" value="C:plasma membrane"/>
    <property type="evidence" value="ECO:0000250"/>
    <property type="project" value="UniProtKB"/>
</dbReference>
<dbReference type="GO" id="GO:0032991">
    <property type="term" value="C:protein-containing complex"/>
    <property type="evidence" value="ECO:0000250"/>
    <property type="project" value="UniProtKB"/>
</dbReference>
<dbReference type="GO" id="GO:0030315">
    <property type="term" value="C:T-tubule"/>
    <property type="evidence" value="ECO:0000250"/>
    <property type="project" value="UniProtKB"/>
</dbReference>
<dbReference type="GO" id="GO:0030018">
    <property type="term" value="C:Z disc"/>
    <property type="evidence" value="ECO:0000250"/>
    <property type="project" value="UniProtKB"/>
</dbReference>
<dbReference type="GO" id="GO:0005509">
    <property type="term" value="F:calcium ion binding"/>
    <property type="evidence" value="ECO:0000250"/>
    <property type="project" value="UniProtKB"/>
</dbReference>
<dbReference type="GO" id="GO:0004198">
    <property type="term" value="F:calcium-dependent cysteine-type endopeptidase activity"/>
    <property type="evidence" value="ECO:0000250"/>
    <property type="project" value="UniProtKB"/>
</dbReference>
<dbReference type="GO" id="GO:0003824">
    <property type="term" value="F:catalytic activity"/>
    <property type="evidence" value="ECO:0000250"/>
    <property type="project" value="UniProtKB"/>
</dbReference>
<dbReference type="GO" id="GO:0055103">
    <property type="term" value="F:ligase regulator activity"/>
    <property type="evidence" value="ECO:0000250"/>
    <property type="project" value="UniProtKB"/>
</dbReference>
<dbReference type="GO" id="GO:0060090">
    <property type="term" value="F:molecular adaptor activity"/>
    <property type="evidence" value="ECO:0000250"/>
    <property type="project" value="UniProtKB"/>
</dbReference>
<dbReference type="GO" id="GO:0008233">
    <property type="term" value="F:peptidase activity"/>
    <property type="evidence" value="ECO:0000250"/>
    <property type="project" value="UniProtKB"/>
</dbReference>
<dbReference type="GO" id="GO:0031402">
    <property type="term" value="F:sodium ion binding"/>
    <property type="evidence" value="ECO:0000250"/>
    <property type="project" value="UniProtKB"/>
</dbReference>
<dbReference type="GO" id="GO:0008307">
    <property type="term" value="F:structural constituent of muscle"/>
    <property type="evidence" value="ECO:0000250"/>
    <property type="project" value="UniProtKB"/>
</dbReference>
<dbReference type="GO" id="GO:0031432">
    <property type="term" value="F:titin binding"/>
    <property type="evidence" value="ECO:0000250"/>
    <property type="project" value="UniProtKB"/>
</dbReference>
<dbReference type="GO" id="GO:1990092">
    <property type="term" value="P:calcium-dependent self proteolysis"/>
    <property type="evidence" value="ECO:0000250"/>
    <property type="project" value="UniProtKB"/>
</dbReference>
<dbReference type="GO" id="GO:0071277">
    <property type="term" value="P:cellular response to calcium ion"/>
    <property type="evidence" value="ECO:0000250"/>
    <property type="project" value="UniProtKB"/>
</dbReference>
<dbReference type="GO" id="GO:0071472">
    <property type="term" value="P:cellular response to salt stress"/>
    <property type="evidence" value="ECO:0000250"/>
    <property type="project" value="UniProtKB"/>
</dbReference>
<dbReference type="GO" id="GO:0061061">
    <property type="term" value="P:muscle structure development"/>
    <property type="evidence" value="ECO:0000250"/>
    <property type="project" value="UniProtKB"/>
</dbReference>
<dbReference type="GO" id="GO:0030239">
    <property type="term" value="P:myofibril assembly"/>
    <property type="evidence" value="ECO:0000250"/>
    <property type="project" value="UniProtKB"/>
</dbReference>
<dbReference type="GO" id="GO:0043066">
    <property type="term" value="P:negative regulation of apoptotic process"/>
    <property type="evidence" value="ECO:0000250"/>
    <property type="project" value="UniProtKB"/>
</dbReference>
<dbReference type="GO" id="GO:0045892">
    <property type="term" value="P:negative regulation of DNA-templated transcription"/>
    <property type="evidence" value="ECO:0000250"/>
    <property type="project" value="UniProtKB"/>
</dbReference>
<dbReference type="GO" id="GO:0033234">
    <property type="term" value="P:negative regulation of protein sumoylation"/>
    <property type="evidence" value="ECO:0000250"/>
    <property type="project" value="UniProtKB"/>
</dbReference>
<dbReference type="GO" id="GO:0045893">
    <property type="term" value="P:positive regulation of DNA-templated transcription"/>
    <property type="evidence" value="ECO:0000250"/>
    <property type="project" value="UniProtKB"/>
</dbReference>
<dbReference type="GO" id="GO:0045862">
    <property type="term" value="P:positive regulation of proteolysis"/>
    <property type="evidence" value="ECO:0000250"/>
    <property type="project" value="UniProtKB"/>
</dbReference>
<dbReference type="GO" id="GO:0051281">
    <property type="term" value="P:positive regulation of release of sequestered calcium ion into cytosol"/>
    <property type="evidence" value="ECO:0000250"/>
    <property type="project" value="UniProtKB"/>
</dbReference>
<dbReference type="GO" id="GO:0014718">
    <property type="term" value="P:positive regulation of satellite cell activation involved in skeletal muscle regeneration"/>
    <property type="evidence" value="ECO:0000250"/>
    <property type="project" value="UniProtKB"/>
</dbReference>
<dbReference type="GO" id="GO:0030163">
    <property type="term" value="P:protein catabolic process"/>
    <property type="evidence" value="ECO:0000250"/>
    <property type="project" value="UniProtKB"/>
</dbReference>
<dbReference type="GO" id="GO:0072657">
    <property type="term" value="P:protein localization to membrane"/>
    <property type="evidence" value="ECO:0000250"/>
    <property type="project" value="UniProtKB"/>
</dbReference>
<dbReference type="GO" id="GO:0065003">
    <property type="term" value="P:protein-containing complex assembly"/>
    <property type="evidence" value="ECO:0000250"/>
    <property type="project" value="UniProtKB"/>
</dbReference>
<dbReference type="GO" id="GO:0006508">
    <property type="term" value="P:proteolysis"/>
    <property type="evidence" value="ECO:0000250"/>
    <property type="project" value="UniProtKB"/>
</dbReference>
<dbReference type="GO" id="GO:0043122">
    <property type="term" value="P:regulation of canonical NF-kappaB signal transduction"/>
    <property type="evidence" value="ECO:0000250"/>
    <property type="project" value="UniProtKB"/>
</dbReference>
<dbReference type="GO" id="GO:0051592">
    <property type="term" value="P:response to calcium ion"/>
    <property type="evidence" value="ECO:0000250"/>
    <property type="project" value="UniProtKB"/>
</dbReference>
<dbReference type="GO" id="GO:0014850">
    <property type="term" value="P:response to muscle activity"/>
    <property type="evidence" value="ECO:0000250"/>
    <property type="project" value="UniProtKB"/>
</dbReference>
<dbReference type="GO" id="GO:0045214">
    <property type="term" value="P:sarcomere organization"/>
    <property type="evidence" value="ECO:0000250"/>
    <property type="project" value="UniProtKB"/>
</dbReference>
<dbReference type="GO" id="GO:0097264">
    <property type="term" value="P:self proteolysis"/>
    <property type="evidence" value="ECO:0000250"/>
    <property type="project" value="UniProtKB"/>
</dbReference>
<dbReference type="CDD" id="cd00214">
    <property type="entry name" value="Calpain_III"/>
    <property type="match status" value="1"/>
</dbReference>
<dbReference type="CDD" id="cd00044">
    <property type="entry name" value="CysPc"/>
    <property type="match status" value="1"/>
</dbReference>
<dbReference type="CDD" id="cd16190">
    <property type="entry name" value="EFh_PEF_CAPN3"/>
    <property type="match status" value="1"/>
</dbReference>
<dbReference type="FunFam" id="3.90.70.10:FF:000555">
    <property type="entry name" value="Calpain-3"/>
    <property type="match status" value="1"/>
</dbReference>
<dbReference type="FunFam" id="1.10.238.10:FF:000065">
    <property type="entry name" value="calpain-3 isoform X1"/>
    <property type="match status" value="1"/>
</dbReference>
<dbReference type="FunFam" id="2.60.120.380:FF:000002">
    <property type="entry name" value="calpain-3 isoform X1"/>
    <property type="match status" value="1"/>
</dbReference>
<dbReference type="Gene3D" id="2.60.120.380">
    <property type="match status" value="1"/>
</dbReference>
<dbReference type="Gene3D" id="3.90.70.10">
    <property type="entry name" value="Cysteine proteinases"/>
    <property type="match status" value="1"/>
</dbReference>
<dbReference type="Gene3D" id="1.10.238.10">
    <property type="entry name" value="EF-hand"/>
    <property type="match status" value="1"/>
</dbReference>
<dbReference type="InterPro" id="IPR033883">
    <property type="entry name" value="C2_III"/>
</dbReference>
<dbReference type="InterPro" id="IPR022684">
    <property type="entry name" value="Calpain_cysteine_protease"/>
</dbReference>
<dbReference type="InterPro" id="IPR022682">
    <property type="entry name" value="Calpain_domain_III"/>
</dbReference>
<dbReference type="InterPro" id="IPR022683">
    <property type="entry name" value="Calpain_III"/>
</dbReference>
<dbReference type="InterPro" id="IPR036213">
    <property type="entry name" value="Calpain_III_sf"/>
</dbReference>
<dbReference type="InterPro" id="IPR054069">
    <property type="entry name" value="CAPN3/13-like_C_EFh"/>
</dbReference>
<dbReference type="InterPro" id="IPR029531">
    <property type="entry name" value="CAPN3_PEF"/>
</dbReference>
<dbReference type="InterPro" id="IPR011992">
    <property type="entry name" value="EF-hand-dom_pair"/>
</dbReference>
<dbReference type="InterPro" id="IPR018247">
    <property type="entry name" value="EF_Hand_1_Ca_BS"/>
</dbReference>
<dbReference type="InterPro" id="IPR002048">
    <property type="entry name" value="EF_hand_dom"/>
</dbReference>
<dbReference type="InterPro" id="IPR038765">
    <property type="entry name" value="Papain-like_cys_pep_sf"/>
</dbReference>
<dbReference type="InterPro" id="IPR000169">
    <property type="entry name" value="Pept_cys_AS"/>
</dbReference>
<dbReference type="InterPro" id="IPR001300">
    <property type="entry name" value="Peptidase_C2_calpain_cat"/>
</dbReference>
<dbReference type="PANTHER" id="PTHR10183">
    <property type="entry name" value="CALPAIN"/>
    <property type="match status" value="1"/>
</dbReference>
<dbReference type="PANTHER" id="PTHR10183:SF329">
    <property type="entry name" value="CALPAIN-3"/>
    <property type="match status" value="1"/>
</dbReference>
<dbReference type="Pfam" id="PF01067">
    <property type="entry name" value="Calpain_III"/>
    <property type="match status" value="1"/>
</dbReference>
<dbReference type="Pfam" id="PF16648">
    <property type="entry name" value="Calpain_u2"/>
    <property type="match status" value="1"/>
</dbReference>
<dbReference type="Pfam" id="PF21875">
    <property type="entry name" value="CAPN13-like_C_EFh"/>
    <property type="match status" value="1"/>
</dbReference>
<dbReference type="Pfam" id="PF13833">
    <property type="entry name" value="EF-hand_8"/>
    <property type="match status" value="1"/>
</dbReference>
<dbReference type="Pfam" id="PF00648">
    <property type="entry name" value="Peptidase_C2"/>
    <property type="match status" value="1"/>
</dbReference>
<dbReference type="PRINTS" id="PR00704">
    <property type="entry name" value="CALPAIN"/>
</dbReference>
<dbReference type="SMART" id="SM00720">
    <property type="entry name" value="calpain_III"/>
    <property type="match status" value="1"/>
</dbReference>
<dbReference type="SMART" id="SM00230">
    <property type="entry name" value="CysPc"/>
    <property type="match status" value="1"/>
</dbReference>
<dbReference type="SMART" id="SM00054">
    <property type="entry name" value="EFh"/>
    <property type="match status" value="3"/>
</dbReference>
<dbReference type="SUPFAM" id="SSF49758">
    <property type="entry name" value="Calpain large subunit, middle domain (domain III)"/>
    <property type="match status" value="1"/>
</dbReference>
<dbReference type="SUPFAM" id="SSF54001">
    <property type="entry name" value="Cysteine proteinases"/>
    <property type="match status" value="1"/>
</dbReference>
<dbReference type="SUPFAM" id="SSF47473">
    <property type="entry name" value="EF-hand"/>
    <property type="match status" value="1"/>
</dbReference>
<dbReference type="PROSITE" id="PS50203">
    <property type="entry name" value="CALPAIN_CAT"/>
    <property type="match status" value="1"/>
</dbReference>
<dbReference type="PROSITE" id="PS00018">
    <property type="entry name" value="EF_HAND_1"/>
    <property type="match status" value="2"/>
</dbReference>
<dbReference type="PROSITE" id="PS50222">
    <property type="entry name" value="EF_HAND_2"/>
    <property type="match status" value="4"/>
</dbReference>
<dbReference type="PROSITE" id="PS00139">
    <property type="entry name" value="THIOL_PROTEASE_CYS"/>
    <property type="match status" value="1"/>
</dbReference>
<sequence>MPTVISASVAPRTGAEPMSPGPIAQAAQDKGTEAGGGNPSGIYSAIISRNFPIIGVKEKTFEQLHKKCLEKKVLFVDPEFPPDETSLFYSQKFPIQFVWKRPPEICENPRFIVGGANRTDICQGDLGDCWFLAAIACLTLNKRLLFRVIPHDQSFTENYAGIFHFQFWRYGDWVDVVIDDCLPTYNNQLVFTKSNHRNEFWNALLEKAYAKLHGSYEALKGGNTTEAMEDFTGGVTEFFEIKDAPRDMYKIMKKAIERGSLMGCSIDDGTNMTYGTSPSGLKMGELIERMVRNMDNSRLRDSDLIPEGCSDDRPTRMIVPVQFETRMACGLVKGHAYSVTGLEEALYKGEKVKLVRLRNPWGQVEWNGSWSDSWKDWSYVDKDEKARLQHQVTEDGEFWMSYDDFIYHFTKLEICNLTADALESDKLQTWTVSVNEGRWVRGCSAGGCRNFPDTFWTNPQYRLKLLEEDDDPDDSEVICSFLVALMQKNRRKDRKLGANLFTIGFAIYEVPKEMHGNKQHLQKDFFLYNASKARSRTYINMREVSERFRLPPSEYVIVPSTYEPHQEGEFILRVFSEKRNLSEEVENTISVDRPVKKKKNKPIIFVSDRANSNKELGVDQETEEGKDNTSPDKQAKSPQLEPGNTDQESEEQRQFRNIFRQIAGDDMEICADELKNVLNRVVNKHKDLKTQGFTLESCRSMIALMDTDGSGRLNLQEFHHLWKKIKTWQKIFKHYDTDQSGTINSYEMRNAVKDAGFHLNNQLYDIITMRYADKYMNIDFDSFICCFVRLEGMFRAFNAFDKDGDGIIKLNVLEWLQLTMYA</sequence>
<accession>P51186</accession>
<accession>O97700</accession>
<accession>Q9TTH9</accession>
<reference key="1">
    <citation type="journal article" date="1999" name="Anim. Genet.">
        <title>Molecular cloning and mapping of the bovine and ovine skeletal muscle-specific calpains.</title>
        <authorList>
            <person name="Nonneman D."/>
            <person name="Koohmaraie M."/>
        </authorList>
    </citation>
    <scope>NUCLEOTIDE SEQUENCE [MRNA]</scope>
    <source>
        <tissue>Skeletal muscle</tissue>
    </source>
</reference>
<reference key="2">
    <citation type="submission" date="1994-04" db="EMBL/GenBank/DDBJ databases">
        <authorList>
            <person name="Sun W."/>
            <person name="Bidwell C.A."/>
            <person name="Ji S."/>
            <person name="Hancock D.L."/>
        </authorList>
    </citation>
    <scope>NUCLEOTIDE SEQUENCE [MRNA] OF 278-394</scope>
    <source>
        <tissue>Skeletal muscle</tissue>
    </source>
</reference>
<reference key="3">
    <citation type="journal article" date="2001" name="J. Anim. Sci.">
        <title>Intermuscular variation in tenderness: association with the ubiquitous and muscle-specific calpains.</title>
        <authorList>
            <person name="Ilian M.A."/>
            <person name="Morton J.D."/>
            <person name="Kent M.P."/>
            <person name="Le Couteur C.E."/>
            <person name="Hickford J."/>
            <person name="Cowley R."/>
            <person name="Bickerstaffe R."/>
        </authorList>
    </citation>
    <scope>NUCLEOTIDE SEQUENCE [MRNA] OF 288-604</scope>
</reference>